<gene>
    <name evidence="1" type="primary">tsf</name>
    <name type="ordered locus">SAUSA300_1150</name>
</gene>
<sequence>MATISAKLVKELREKTGAGMMDCKKALTETDGDIDKAIDYLREKGIAKAAKKADRIAAEGLVHVETKGNDAVIVEINSETDFVARNEGFQELVKEIANQVLDTKAETVEALMETTLPNGKSVDERIKEAISTIGEKLSVRRFAIRTKTDNDAFGAYLHMGGRIGVLTVVEGSTDEEAARDVAMHIAAINPKYVSSEQVSEEEINHEREVLKQQALNEGKPENIVEKMVEGRLRKYLQEICAVDQDFVKNPDVTVEAFLKTKGGKLVDFVRYEVGEGMEKREENFADEVKGQMK</sequence>
<organism>
    <name type="scientific">Staphylococcus aureus (strain USA300)</name>
    <dbReference type="NCBI Taxonomy" id="367830"/>
    <lineage>
        <taxon>Bacteria</taxon>
        <taxon>Bacillati</taxon>
        <taxon>Bacillota</taxon>
        <taxon>Bacilli</taxon>
        <taxon>Bacillales</taxon>
        <taxon>Staphylococcaceae</taxon>
        <taxon>Staphylococcus</taxon>
    </lineage>
</organism>
<dbReference type="EMBL" id="CP000255">
    <property type="protein sequence ID" value="ABD21698.1"/>
    <property type="molecule type" value="Genomic_DNA"/>
</dbReference>
<dbReference type="RefSeq" id="WP_000201387.1">
    <property type="nucleotide sequence ID" value="NZ_CP027476.1"/>
</dbReference>
<dbReference type="SMR" id="Q2FHI1"/>
<dbReference type="KEGG" id="saa:SAUSA300_1150"/>
<dbReference type="HOGENOM" id="CLU_047155_0_2_9"/>
<dbReference type="OMA" id="DAGMMDC"/>
<dbReference type="Proteomes" id="UP000001939">
    <property type="component" value="Chromosome"/>
</dbReference>
<dbReference type="GO" id="GO:0005737">
    <property type="term" value="C:cytoplasm"/>
    <property type="evidence" value="ECO:0007669"/>
    <property type="project" value="UniProtKB-SubCell"/>
</dbReference>
<dbReference type="GO" id="GO:0003746">
    <property type="term" value="F:translation elongation factor activity"/>
    <property type="evidence" value="ECO:0007669"/>
    <property type="project" value="UniProtKB-UniRule"/>
</dbReference>
<dbReference type="CDD" id="cd14275">
    <property type="entry name" value="UBA_EF-Ts"/>
    <property type="match status" value="1"/>
</dbReference>
<dbReference type="FunFam" id="1.10.286.20:FF:000003">
    <property type="entry name" value="Elongation factor Ts"/>
    <property type="match status" value="1"/>
</dbReference>
<dbReference type="FunFam" id="1.10.8.10:FF:000001">
    <property type="entry name" value="Elongation factor Ts"/>
    <property type="match status" value="1"/>
</dbReference>
<dbReference type="FunFam" id="3.30.479.20:FF:000005">
    <property type="entry name" value="Elongation factor Ts"/>
    <property type="match status" value="1"/>
</dbReference>
<dbReference type="Gene3D" id="1.10.286.20">
    <property type="match status" value="1"/>
</dbReference>
<dbReference type="Gene3D" id="1.10.8.10">
    <property type="entry name" value="DNA helicase RuvA subunit, C-terminal domain"/>
    <property type="match status" value="1"/>
</dbReference>
<dbReference type="Gene3D" id="3.30.479.20">
    <property type="entry name" value="Elongation factor Ts, dimerisation domain"/>
    <property type="match status" value="2"/>
</dbReference>
<dbReference type="HAMAP" id="MF_00050">
    <property type="entry name" value="EF_Ts"/>
    <property type="match status" value="1"/>
</dbReference>
<dbReference type="InterPro" id="IPR036402">
    <property type="entry name" value="EF-Ts_dimer_sf"/>
</dbReference>
<dbReference type="InterPro" id="IPR001816">
    <property type="entry name" value="Transl_elong_EFTs/EF1B"/>
</dbReference>
<dbReference type="InterPro" id="IPR014039">
    <property type="entry name" value="Transl_elong_EFTs/EF1B_dimer"/>
</dbReference>
<dbReference type="InterPro" id="IPR018101">
    <property type="entry name" value="Transl_elong_Ts_CS"/>
</dbReference>
<dbReference type="InterPro" id="IPR009060">
    <property type="entry name" value="UBA-like_sf"/>
</dbReference>
<dbReference type="NCBIfam" id="TIGR00116">
    <property type="entry name" value="tsf"/>
    <property type="match status" value="1"/>
</dbReference>
<dbReference type="PANTHER" id="PTHR11741">
    <property type="entry name" value="ELONGATION FACTOR TS"/>
    <property type="match status" value="1"/>
</dbReference>
<dbReference type="PANTHER" id="PTHR11741:SF0">
    <property type="entry name" value="ELONGATION FACTOR TS, MITOCHONDRIAL"/>
    <property type="match status" value="1"/>
</dbReference>
<dbReference type="Pfam" id="PF00889">
    <property type="entry name" value="EF_TS"/>
    <property type="match status" value="1"/>
</dbReference>
<dbReference type="SUPFAM" id="SSF54713">
    <property type="entry name" value="Elongation factor Ts (EF-Ts), dimerisation domain"/>
    <property type="match status" value="2"/>
</dbReference>
<dbReference type="SUPFAM" id="SSF46934">
    <property type="entry name" value="UBA-like"/>
    <property type="match status" value="1"/>
</dbReference>
<dbReference type="PROSITE" id="PS01126">
    <property type="entry name" value="EF_TS_1"/>
    <property type="match status" value="1"/>
</dbReference>
<dbReference type="PROSITE" id="PS01127">
    <property type="entry name" value="EF_TS_2"/>
    <property type="match status" value="1"/>
</dbReference>
<protein>
    <recommendedName>
        <fullName evidence="1">Elongation factor Ts</fullName>
        <shortName evidence="1">EF-Ts</shortName>
    </recommendedName>
</protein>
<proteinExistence type="inferred from homology"/>
<accession>Q2FHI1</accession>
<feature type="chain" id="PRO_0000241532" description="Elongation factor Ts">
    <location>
        <begin position="1"/>
        <end position="293"/>
    </location>
</feature>
<feature type="region of interest" description="Involved in Mg(2+) ion dislocation from EF-Tu" evidence="1">
    <location>
        <begin position="80"/>
        <end position="83"/>
    </location>
</feature>
<name>EFTS_STAA3</name>
<keyword id="KW-0963">Cytoplasm</keyword>
<keyword id="KW-0251">Elongation factor</keyword>
<keyword id="KW-0648">Protein biosynthesis</keyword>
<evidence type="ECO:0000255" key="1">
    <source>
        <dbReference type="HAMAP-Rule" id="MF_00050"/>
    </source>
</evidence>
<reference key="1">
    <citation type="journal article" date="2006" name="Lancet">
        <title>Complete genome sequence of USA300, an epidemic clone of community-acquired meticillin-resistant Staphylococcus aureus.</title>
        <authorList>
            <person name="Diep B.A."/>
            <person name="Gill S.R."/>
            <person name="Chang R.F."/>
            <person name="Phan T.H."/>
            <person name="Chen J.H."/>
            <person name="Davidson M.G."/>
            <person name="Lin F."/>
            <person name="Lin J."/>
            <person name="Carleton H.A."/>
            <person name="Mongodin E.F."/>
            <person name="Sensabaugh G.F."/>
            <person name="Perdreau-Remington F."/>
        </authorList>
    </citation>
    <scope>NUCLEOTIDE SEQUENCE [LARGE SCALE GENOMIC DNA]</scope>
    <source>
        <strain>USA300</strain>
    </source>
</reference>
<comment type="function">
    <text evidence="1">Associates with the EF-Tu.GDP complex and induces the exchange of GDP to GTP. It remains bound to the aminoacyl-tRNA.EF-Tu.GTP complex up to the GTP hydrolysis stage on the ribosome.</text>
</comment>
<comment type="subcellular location">
    <subcellularLocation>
        <location evidence="1">Cytoplasm</location>
    </subcellularLocation>
</comment>
<comment type="similarity">
    <text evidence="1">Belongs to the EF-Ts family.</text>
</comment>